<feature type="signal peptide" evidence="4">
    <location>
        <begin position="1"/>
        <end position="22"/>
    </location>
</feature>
<feature type="chain" id="PRO_0000010936" description="Interleukin-12 subunit beta">
    <location>
        <begin position="23"/>
        <end position="327"/>
    </location>
</feature>
<feature type="domain" description="Ig-like C2-type">
    <location>
        <begin position="23"/>
        <end position="106"/>
    </location>
</feature>
<feature type="domain" description="Fibronectin type-III" evidence="6">
    <location>
        <begin position="238"/>
        <end position="327"/>
    </location>
</feature>
<feature type="glycosylation site" description="N-linked (GlcNAc...) asparagine" evidence="4">
    <location>
        <position position="223"/>
    </location>
</feature>
<feature type="disulfide bond" evidence="5">
    <location>
        <begin position="50"/>
        <end position="90"/>
    </location>
</feature>
<feature type="disulfide bond" description="Interchain (with C-98 in IL12A and C-76 in IL23A)" evidence="2 5">
    <location>
        <position position="200"/>
    </location>
</feature>
<feature type="sequence conflict" description="In Ref. 2; AAF20151." evidence="7" ref="2">
    <original>T</original>
    <variation>A</variation>
    <location>
        <position position="290"/>
    </location>
</feature>
<evidence type="ECO:0000250" key="1"/>
<evidence type="ECO:0000250" key="2">
    <source>
        <dbReference type="UniProtKB" id="P29460"/>
    </source>
</evidence>
<evidence type="ECO:0000250" key="3">
    <source>
        <dbReference type="UniProtKB" id="P43432"/>
    </source>
</evidence>
<evidence type="ECO:0000255" key="4"/>
<evidence type="ECO:0000255" key="5">
    <source>
        <dbReference type="PROSITE-ProRule" id="PRU00114"/>
    </source>
</evidence>
<evidence type="ECO:0000255" key="6">
    <source>
        <dbReference type="PROSITE-ProRule" id="PRU00316"/>
    </source>
</evidence>
<evidence type="ECO:0000305" key="7"/>
<name>IL12B_SHEEP</name>
<comment type="function">
    <text evidence="1">Cytokine that can act as a growth factor for activated T and NK cells, enhance the lytic activity of NK/lymphokine-activated killer cells, and stimulate the production of IFN-gamma by resting PBMC.</text>
</comment>
<comment type="function">
    <text evidence="1">Associates with IL23A to form the IL-23 interleukin, a heterodimeric cytokine which functions in innate and adaptive immunity. IL-23 may constitute with IL-17 an acute response to infection in peripheral tissues. IL-23 binds to a heterodimeric receptor complex composed of IL12RB1 and IL23R, activates the Jak-Stat signaling cascade, stimulates memory rather than naive T-cells and promotes production of pro-inflammatory cytokines. IL-23 induces autoimmune inflammation and thus may be responsible for autoimmune inflammatory diseases and may be important for tumorigenesis (By similarity).</text>
</comment>
<comment type="subunit">
    <text evidence="2 3">Heterodimer with IL12A; disulfide-linked. The heterodimer is known as interleukin IL-12. Heterodimer with IL23A; disulfide-linked. The heterodimer is known as interleukin IL-23. Also secreted as a monomer. Interacts with NBR1; this interaction promotes IL-12 secretion (By similarity).</text>
</comment>
<comment type="subcellular location">
    <subcellularLocation>
        <location>Secreted</location>
    </subcellularLocation>
</comment>
<comment type="similarity">
    <text evidence="7">Belongs to the IL-12B family.</text>
</comment>
<protein>
    <recommendedName>
        <fullName>Interleukin-12 subunit beta</fullName>
        <shortName>IL-12B</shortName>
    </recommendedName>
    <alternativeName>
        <fullName>Cytotoxic lymphocyte maturation factor 40 kDa subunit</fullName>
        <shortName>CLMF p40</shortName>
    </alternativeName>
    <alternativeName>
        <fullName>IL-12 subunit p40</fullName>
    </alternativeName>
</protein>
<sequence length="327" mass="36937">MHPQQLVVSWFSLVLLASPIVAIWELEKNVYVVELDWYPNAPGETVVLTCDTPEEDGITWTSDQSSEVLGSGKTLTIQVKEFGDAGQYTCHKGGEVLSRSLLLLHKKEDGIWSTDILKDQKEPKAKSFLKCEAKDYSGHFTCSWLTAISTNLKFSVKSSRGSSDPRGVTCGAASLSAEKVSMDHREYNKYTVECQEGSACPAAEESLPIEVVMEAVHKLKYENYTSSFFIRDIIKPDPPKNLQLRPLKNSRQVEVSWEYPDTWSTPHSYFSLTFCVQVQGKNKREKKLFTDQTSAKVTCHKDANIRVQARDRYYSSFWSEWASVSCS</sequence>
<gene>
    <name type="primary">IL12B</name>
</gene>
<dbReference type="EMBL" id="AF004024">
    <property type="protein sequence ID" value="AAB61368.2"/>
    <property type="molecule type" value="mRNA"/>
</dbReference>
<dbReference type="EMBL" id="AF209435">
    <property type="protein sequence ID" value="AAF20151.1"/>
    <property type="molecule type" value="mRNA"/>
</dbReference>
<dbReference type="RefSeq" id="NP_001009438.1">
    <property type="nucleotide sequence ID" value="NM_001009438.1"/>
</dbReference>
<dbReference type="SMR" id="P68220"/>
<dbReference type="STRING" id="9940.ENSOARP00000014084"/>
<dbReference type="GlyCosmos" id="P68220">
    <property type="glycosylation" value="1 site, No reported glycans"/>
</dbReference>
<dbReference type="PaxDb" id="9940-ENSOARP00000014084"/>
<dbReference type="Ensembl" id="ENSOART00025020748">
    <property type="protein sequence ID" value="ENSOARP00025010332"/>
    <property type="gene ID" value="ENSOARG00025012578"/>
</dbReference>
<dbReference type="Ensembl" id="ENSOART00185002486">
    <property type="protein sequence ID" value="ENSOARP00185001292"/>
    <property type="gene ID" value="ENSOARG00185001495"/>
</dbReference>
<dbReference type="Ensembl" id="ENSOART00215035850">
    <property type="protein sequence ID" value="ENSOARP00215018617"/>
    <property type="gene ID" value="ENSOARG00215021475"/>
</dbReference>
<dbReference type="Ensembl" id="ENSOART00220068297">
    <property type="protein sequence ID" value="ENSOARP00220036821"/>
    <property type="gene ID" value="ENSOARG00220041032"/>
</dbReference>
<dbReference type="Ensembl" id="ENSOART00225053282">
    <property type="protein sequence ID" value="ENSOARP00225026660"/>
    <property type="gene ID" value="ENSOARG00225032213"/>
</dbReference>
<dbReference type="GeneID" id="443472"/>
<dbReference type="KEGG" id="oas:443472"/>
<dbReference type="CTD" id="3593"/>
<dbReference type="eggNOG" id="ENOG502RZMA">
    <property type="taxonomic scope" value="Eukaryota"/>
</dbReference>
<dbReference type="OrthoDB" id="8670716at2759"/>
<dbReference type="Proteomes" id="UP000002356">
    <property type="component" value="Unplaced"/>
</dbReference>
<dbReference type="GO" id="GO:0005615">
    <property type="term" value="C:extracellular space"/>
    <property type="evidence" value="ECO:0000314"/>
    <property type="project" value="AgBase"/>
</dbReference>
<dbReference type="GO" id="GO:0043514">
    <property type="term" value="C:interleukin-12 complex"/>
    <property type="evidence" value="ECO:0000314"/>
    <property type="project" value="AgBase"/>
</dbReference>
<dbReference type="GO" id="GO:0016020">
    <property type="term" value="C:membrane"/>
    <property type="evidence" value="ECO:0007669"/>
    <property type="project" value="InterPro"/>
</dbReference>
<dbReference type="GO" id="GO:0005125">
    <property type="term" value="F:cytokine activity"/>
    <property type="evidence" value="ECO:0007669"/>
    <property type="project" value="UniProtKB-KW"/>
</dbReference>
<dbReference type="GO" id="GO:0004896">
    <property type="term" value="F:cytokine receptor activity"/>
    <property type="evidence" value="ECO:0007669"/>
    <property type="project" value="InterPro"/>
</dbReference>
<dbReference type="GO" id="GO:0042164">
    <property type="term" value="F:interleukin-12 alpha subunit binding"/>
    <property type="evidence" value="ECO:0000353"/>
    <property type="project" value="AgBase"/>
</dbReference>
<dbReference type="GO" id="GO:0046982">
    <property type="term" value="F:protein heterodimerization activity"/>
    <property type="evidence" value="ECO:0000353"/>
    <property type="project" value="AgBase"/>
</dbReference>
<dbReference type="GO" id="GO:0032946">
    <property type="term" value="P:positive regulation of mononuclear cell proliferation"/>
    <property type="evidence" value="ECO:0000315"/>
    <property type="project" value="AgBase"/>
</dbReference>
<dbReference type="GO" id="GO:0032609">
    <property type="term" value="P:type II interferon production"/>
    <property type="evidence" value="ECO:0000314"/>
    <property type="project" value="AgBase"/>
</dbReference>
<dbReference type="CDD" id="cd00063">
    <property type="entry name" value="FN3"/>
    <property type="match status" value="1"/>
</dbReference>
<dbReference type="FunFam" id="2.60.40.10:FF:000959">
    <property type="entry name" value="Interleukin-12 subunit beta"/>
    <property type="match status" value="1"/>
</dbReference>
<dbReference type="FunFam" id="2.60.40.10:FF:001008">
    <property type="entry name" value="Interleukin-12 subunit beta"/>
    <property type="match status" value="1"/>
</dbReference>
<dbReference type="FunFam" id="2.60.40.10:FF:001009">
    <property type="entry name" value="Interleukin-12 subunit beta"/>
    <property type="match status" value="1"/>
</dbReference>
<dbReference type="Gene3D" id="2.60.40.10">
    <property type="entry name" value="Immunoglobulins"/>
    <property type="match status" value="3"/>
</dbReference>
<dbReference type="InterPro" id="IPR003961">
    <property type="entry name" value="FN3_dom"/>
</dbReference>
<dbReference type="InterPro" id="IPR036116">
    <property type="entry name" value="FN3_sf"/>
</dbReference>
<dbReference type="InterPro" id="IPR003530">
    <property type="entry name" value="Hematopoietin_rcpt_L_F3_CS"/>
</dbReference>
<dbReference type="InterPro" id="IPR007110">
    <property type="entry name" value="Ig-like_dom"/>
</dbReference>
<dbReference type="InterPro" id="IPR036179">
    <property type="entry name" value="Ig-like_dom_sf"/>
</dbReference>
<dbReference type="InterPro" id="IPR013783">
    <property type="entry name" value="Ig-like_fold"/>
</dbReference>
<dbReference type="InterPro" id="IPR003598">
    <property type="entry name" value="Ig_sub2"/>
</dbReference>
<dbReference type="InterPro" id="IPR050676">
    <property type="entry name" value="IL-12"/>
</dbReference>
<dbReference type="InterPro" id="IPR015528">
    <property type="entry name" value="IL-12_beta"/>
</dbReference>
<dbReference type="InterPro" id="IPR019482">
    <property type="entry name" value="IL-12_beta_cen-dom"/>
</dbReference>
<dbReference type="PANTHER" id="PTHR48485:SF4">
    <property type="entry name" value="INTERLEUKIN-12 SUBUNIT BETA"/>
    <property type="match status" value="1"/>
</dbReference>
<dbReference type="PANTHER" id="PTHR48485">
    <property type="entry name" value="INTERLEUKIN-12 SUBUNIT BETA-RELATED"/>
    <property type="match status" value="1"/>
</dbReference>
<dbReference type="Pfam" id="PF10420">
    <property type="entry name" value="IL12p40_C"/>
    <property type="match status" value="1"/>
</dbReference>
<dbReference type="PIRSF" id="PIRSF038007">
    <property type="entry name" value="IL_12_beta"/>
    <property type="match status" value="1"/>
</dbReference>
<dbReference type="PRINTS" id="PR01928">
    <property type="entry name" value="INTRLEUKN12B"/>
</dbReference>
<dbReference type="SMART" id="SM00408">
    <property type="entry name" value="IGc2"/>
    <property type="match status" value="1"/>
</dbReference>
<dbReference type="SUPFAM" id="SSF49265">
    <property type="entry name" value="Fibronectin type III"/>
    <property type="match status" value="2"/>
</dbReference>
<dbReference type="SUPFAM" id="SSF48726">
    <property type="entry name" value="Immunoglobulin"/>
    <property type="match status" value="1"/>
</dbReference>
<dbReference type="PROSITE" id="PS50853">
    <property type="entry name" value="FN3"/>
    <property type="match status" value="1"/>
</dbReference>
<dbReference type="PROSITE" id="PS01354">
    <property type="entry name" value="HEMATOPO_REC_L_F3"/>
    <property type="match status" value="1"/>
</dbReference>
<dbReference type="PROSITE" id="PS50835">
    <property type="entry name" value="IG_LIKE"/>
    <property type="match status" value="1"/>
</dbReference>
<reference key="1">
    <citation type="journal article" date="2000" name="Cytokine">
        <title>Ovine interleukin 12 has biological activity on ovine and human activated peripheral blood mononuclear cells.</title>
        <authorList>
            <person name="Swinburne S.J."/>
            <person name="Russ G.R."/>
            <person name="Krishnan R."/>
        </authorList>
    </citation>
    <scope>NUCLEOTIDE SEQUENCE [MRNA]</scope>
    <scope>SUBUNIT</scope>
    <source>
        <tissue>Peripheral blood</tissue>
    </source>
</reference>
<reference key="2">
    <citation type="journal article" date="2000" name="J. Interferon Cytokine Res.">
        <title>Ovine interleukin-12: analysis of biologic function and species comparison.</title>
        <authorList>
            <person name="De Rose R."/>
            <person name="Scheerlinck J.-P.Y."/>
            <person name="Casey G."/>
            <person name="Wood P.R."/>
            <person name="Tennent J.M."/>
            <person name="Chaplin P.J."/>
        </authorList>
    </citation>
    <scope>NUCLEOTIDE SEQUENCE [MRNA]</scope>
    <source>
        <strain>Merino</strain>
        <tissue>Peripheral blood</tissue>
    </source>
</reference>
<proteinExistence type="evidence at protein level"/>
<organism>
    <name type="scientific">Ovis aries</name>
    <name type="common">Sheep</name>
    <dbReference type="NCBI Taxonomy" id="9940"/>
    <lineage>
        <taxon>Eukaryota</taxon>
        <taxon>Metazoa</taxon>
        <taxon>Chordata</taxon>
        <taxon>Craniata</taxon>
        <taxon>Vertebrata</taxon>
        <taxon>Euteleostomi</taxon>
        <taxon>Mammalia</taxon>
        <taxon>Eutheria</taxon>
        <taxon>Laurasiatheria</taxon>
        <taxon>Artiodactyla</taxon>
        <taxon>Ruminantia</taxon>
        <taxon>Pecora</taxon>
        <taxon>Bovidae</taxon>
        <taxon>Caprinae</taxon>
        <taxon>Ovis</taxon>
    </lineage>
</organism>
<accession>P68220</accession>
<accession>O02815</accession>
<accession>O18989</accession>
<accession>Q9TT18</accession>
<keyword id="KW-0202">Cytokine</keyword>
<keyword id="KW-1015">Disulfide bond</keyword>
<keyword id="KW-0325">Glycoprotein</keyword>
<keyword id="KW-0393">Immunoglobulin domain</keyword>
<keyword id="KW-1185">Reference proteome</keyword>
<keyword id="KW-0964">Secreted</keyword>
<keyword id="KW-0732">Signal</keyword>